<feature type="chain" id="PRO_1000094297" description="2-C-methyl-D-erythritol 2,4-cyclodiphosphate synthase">
    <location>
        <begin position="1"/>
        <end position="163"/>
    </location>
</feature>
<feature type="binding site" evidence="1">
    <location>
        <begin position="12"/>
        <end position="14"/>
    </location>
    <ligand>
        <name>4-CDP-2-C-methyl-D-erythritol 2-phosphate</name>
        <dbReference type="ChEBI" id="CHEBI:57919"/>
    </ligand>
</feature>
<feature type="binding site" evidence="1">
    <location>
        <position position="12"/>
    </location>
    <ligand>
        <name>a divalent metal cation</name>
        <dbReference type="ChEBI" id="CHEBI:60240"/>
    </ligand>
</feature>
<feature type="binding site" evidence="1">
    <location>
        <position position="14"/>
    </location>
    <ligand>
        <name>a divalent metal cation</name>
        <dbReference type="ChEBI" id="CHEBI:60240"/>
    </ligand>
</feature>
<feature type="binding site" evidence="1">
    <location>
        <begin position="38"/>
        <end position="39"/>
    </location>
    <ligand>
        <name>4-CDP-2-C-methyl-D-erythritol 2-phosphate</name>
        <dbReference type="ChEBI" id="CHEBI:57919"/>
    </ligand>
</feature>
<feature type="binding site" evidence="1">
    <location>
        <position position="46"/>
    </location>
    <ligand>
        <name>a divalent metal cation</name>
        <dbReference type="ChEBI" id="CHEBI:60240"/>
    </ligand>
</feature>
<feature type="binding site" evidence="1">
    <location>
        <begin position="60"/>
        <end position="62"/>
    </location>
    <ligand>
        <name>4-CDP-2-C-methyl-D-erythritol 2-phosphate</name>
        <dbReference type="ChEBI" id="CHEBI:57919"/>
    </ligand>
</feature>
<feature type="binding site" evidence="1">
    <location>
        <begin position="136"/>
        <end position="139"/>
    </location>
    <ligand>
        <name>4-CDP-2-C-methyl-D-erythritol 2-phosphate</name>
        <dbReference type="ChEBI" id="CHEBI:57919"/>
    </ligand>
</feature>
<feature type="binding site" evidence="1">
    <location>
        <position position="143"/>
    </location>
    <ligand>
        <name>4-CDP-2-C-methyl-D-erythritol 2-phosphate</name>
        <dbReference type="ChEBI" id="CHEBI:57919"/>
    </ligand>
</feature>
<feature type="binding site" evidence="1">
    <location>
        <position position="146"/>
    </location>
    <ligand>
        <name>4-CDP-2-C-methyl-D-erythritol 2-phosphate</name>
        <dbReference type="ChEBI" id="CHEBI:57919"/>
    </ligand>
</feature>
<feature type="site" description="Transition state stabilizer" evidence="1">
    <location>
        <position position="38"/>
    </location>
</feature>
<feature type="site" description="Transition state stabilizer" evidence="1">
    <location>
        <position position="137"/>
    </location>
</feature>
<organism>
    <name type="scientific">Xanthomonas oryzae pv. oryzae (strain PXO99A)</name>
    <dbReference type="NCBI Taxonomy" id="360094"/>
    <lineage>
        <taxon>Bacteria</taxon>
        <taxon>Pseudomonadati</taxon>
        <taxon>Pseudomonadota</taxon>
        <taxon>Gammaproteobacteria</taxon>
        <taxon>Lysobacterales</taxon>
        <taxon>Lysobacteraceae</taxon>
        <taxon>Xanthomonas</taxon>
    </lineage>
</organism>
<reference key="1">
    <citation type="journal article" date="2008" name="BMC Genomics">
        <title>Genome sequence and rapid evolution of the rice pathogen Xanthomonas oryzae pv. oryzae PXO99A.</title>
        <authorList>
            <person name="Salzberg S.L."/>
            <person name="Sommer D.D."/>
            <person name="Schatz M.C."/>
            <person name="Phillippy A.M."/>
            <person name="Rabinowicz P.D."/>
            <person name="Tsuge S."/>
            <person name="Furutani A."/>
            <person name="Ochiai H."/>
            <person name="Delcher A.L."/>
            <person name="Kelley D."/>
            <person name="Madupu R."/>
            <person name="Puiu D."/>
            <person name="Radune D."/>
            <person name="Shumway M."/>
            <person name="Trapnell C."/>
            <person name="Aparna G."/>
            <person name="Jha G."/>
            <person name="Pandey A."/>
            <person name="Patil P.B."/>
            <person name="Ishihara H."/>
            <person name="Meyer D.F."/>
            <person name="Szurek B."/>
            <person name="Verdier V."/>
            <person name="Koebnik R."/>
            <person name="Dow J.M."/>
            <person name="Ryan R.P."/>
            <person name="Hirata H."/>
            <person name="Tsuyumu S."/>
            <person name="Won Lee S."/>
            <person name="Seo Y.-S."/>
            <person name="Sriariyanum M."/>
            <person name="Ronald P.C."/>
            <person name="Sonti R.V."/>
            <person name="Van Sluys M.-A."/>
            <person name="Leach J.E."/>
            <person name="White F.F."/>
            <person name="Bogdanove A.J."/>
        </authorList>
    </citation>
    <scope>NUCLEOTIDE SEQUENCE [LARGE SCALE GENOMIC DNA]</scope>
    <source>
        <strain>PXO99A</strain>
    </source>
</reference>
<proteinExistence type="inferred from homology"/>
<sequence length="163" mass="17297">MSFNFRIGQGYDVHAFGPGEHVMLGGVRVAHSHGVLAHSDGDVVLHALCDAMLGALALGDIGRHFPPSDERWKDADSAQFLQHCDGLLRERGWRVGNADITVICERPKVGPHAVAMRERIAGLLAIELDAVSVKATTSEQLGFTGRGEGIAAQAAVLLGRIAA</sequence>
<dbReference type="EC" id="4.6.1.12" evidence="1"/>
<dbReference type="EMBL" id="CP000967">
    <property type="protein sequence ID" value="ACD58299.1"/>
    <property type="molecule type" value="Genomic_DNA"/>
</dbReference>
<dbReference type="RefSeq" id="WP_011259526.1">
    <property type="nucleotide sequence ID" value="NC_010717.2"/>
</dbReference>
<dbReference type="SMR" id="B2SUA9"/>
<dbReference type="KEGG" id="xop:PXO_00168"/>
<dbReference type="eggNOG" id="COG0245">
    <property type="taxonomic scope" value="Bacteria"/>
</dbReference>
<dbReference type="HOGENOM" id="CLU_084630_2_0_6"/>
<dbReference type="UniPathway" id="UPA00056">
    <property type="reaction ID" value="UER00095"/>
</dbReference>
<dbReference type="Proteomes" id="UP000001740">
    <property type="component" value="Chromosome"/>
</dbReference>
<dbReference type="GO" id="GO:0008685">
    <property type="term" value="F:2-C-methyl-D-erythritol 2,4-cyclodiphosphate synthase activity"/>
    <property type="evidence" value="ECO:0007669"/>
    <property type="project" value="UniProtKB-UniRule"/>
</dbReference>
<dbReference type="GO" id="GO:0046872">
    <property type="term" value="F:metal ion binding"/>
    <property type="evidence" value="ECO:0007669"/>
    <property type="project" value="UniProtKB-KW"/>
</dbReference>
<dbReference type="GO" id="GO:0019288">
    <property type="term" value="P:isopentenyl diphosphate biosynthetic process, methylerythritol 4-phosphate pathway"/>
    <property type="evidence" value="ECO:0007669"/>
    <property type="project" value="UniProtKB-UniRule"/>
</dbReference>
<dbReference type="GO" id="GO:0016114">
    <property type="term" value="P:terpenoid biosynthetic process"/>
    <property type="evidence" value="ECO:0007669"/>
    <property type="project" value="InterPro"/>
</dbReference>
<dbReference type="CDD" id="cd00554">
    <property type="entry name" value="MECDP_synthase"/>
    <property type="match status" value="1"/>
</dbReference>
<dbReference type="FunFam" id="3.30.1330.50:FF:000001">
    <property type="entry name" value="2-C-methyl-D-erythritol 2,4-cyclodiphosphate synthase"/>
    <property type="match status" value="1"/>
</dbReference>
<dbReference type="Gene3D" id="3.30.1330.50">
    <property type="entry name" value="2-C-methyl-D-erythritol 2,4-cyclodiphosphate synthase"/>
    <property type="match status" value="1"/>
</dbReference>
<dbReference type="HAMAP" id="MF_00107">
    <property type="entry name" value="IspF"/>
    <property type="match status" value="1"/>
</dbReference>
<dbReference type="InterPro" id="IPR003526">
    <property type="entry name" value="MECDP_synthase"/>
</dbReference>
<dbReference type="InterPro" id="IPR020555">
    <property type="entry name" value="MECDP_synthase_CS"/>
</dbReference>
<dbReference type="InterPro" id="IPR036571">
    <property type="entry name" value="MECDP_synthase_sf"/>
</dbReference>
<dbReference type="NCBIfam" id="TIGR00151">
    <property type="entry name" value="ispF"/>
    <property type="match status" value="1"/>
</dbReference>
<dbReference type="PANTHER" id="PTHR43181">
    <property type="entry name" value="2-C-METHYL-D-ERYTHRITOL 2,4-CYCLODIPHOSPHATE SYNTHASE, CHLOROPLASTIC"/>
    <property type="match status" value="1"/>
</dbReference>
<dbReference type="PANTHER" id="PTHR43181:SF1">
    <property type="entry name" value="2-C-METHYL-D-ERYTHRITOL 2,4-CYCLODIPHOSPHATE SYNTHASE, CHLOROPLASTIC"/>
    <property type="match status" value="1"/>
</dbReference>
<dbReference type="Pfam" id="PF02542">
    <property type="entry name" value="YgbB"/>
    <property type="match status" value="1"/>
</dbReference>
<dbReference type="SUPFAM" id="SSF69765">
    <property type="entry name" value="IpsF-like"/>
    <property type="match status" value="1"/>
</dbReference>
<dbReference type="PROSITE" id="PS01350">
    <property type="entry name" value="ISPF"/>
    <property type="match status" value="1"/>
</dbReference>
<gene>
    <name evidence="1" type="primary">ispF</name>
    <name type="ordered locus">PXO_00168</name>
</gene>
<comment type="function">
    <text evidence="1">Involved in the biosynthesis of isopentenyl diphosphate (IPP) and dimethylallyl diphosphate (DMAPP), two major building blocks of isoprenoid compounds. Catalyzes the conversion of 4-diphosphocytidyl-2-C-methyl-D-erythritol 2-phosphate (CDP-ME2P) to 2-C-methyl-D-erythritol 2,4-cyclodiphosphate (ME-CPP) with a corresponding release of cytidine 5-monophosphate (CMP).</text>
</comment>
<comment type="catalytic activity">
    <reaction evidence="1">
        <text>4-CDP-2-C-methyl-D-erythritol 2-phosphate = 2-C-methyl-D-erythritol 2,4-cyclic diphosphate + CMP</text>
        <dbReference type="Rhea" id="RHEA:23864"/>
        <dbReference type="ChEBI" id="CHEBI:57919"/>
        <dbReference type="ChEBI" id="CHEBI:58483"/>
        <dbReference type="ChEBI" id="CHEBI:60377"/>
        <dbReference type="EC" id="4.6.1.12"/>
    </reaction>
</comment>
<comment type="cofactor">
    <cofactor evidence="1">
        <name>a divalent metal cation</name>
        <dbReference type="ChEBI" id="CHEBI:60240"/>
    </cofactor>
    <text evidence="1">Binds 1 divalent metal cation per subunit.</text>
</comment>
<comment type="pathway">
    <text evidence="1">Isoprenoid biosynthesis; isopentenyl diphosphate biosynthesis via DXP pathway; isopentenyl diphosphate from 1-deoxy-D-xylulose 5-phosphate: step 4/6.</text>
</comment>
<comment type="subunit">
    <text evidence="1">Homotrimer.</text>
</comment>
<comment type="similarity">
    <text evidence="1">Belongs to the IspF family.</text>
</comment>
<keyword id="KW-0414">Isoprene biosynthesis</keyword>
<keyword id="KW-0456">Lyase</keyword>
<keyword id="KW-0479">Metal-binding</keyword>
<name>ISPF_XANOP</name>
<protein>
    <recommendedName>
        <fullName evidence="1">2-C-methyl-D-erythritol 2,4-cyclodiphosphate synthase</fullName>
        <shortName evidence="1">MECDP-synthase</shortName>
        <shortName evidence="1">MECPP-synthase</shortName>
        <shortName evidence="1">MECPS</shortName>
        <ecNumber evidence="1">4.6.1.12</ecNumber>
    </recommendedName>
</protein>
<accession>B2SUA9</accession>
<evidence type="ECO:0000255" key="1">
    <source>
        <dbReference type="HAMAP-Rule" id="MF_00107"/>
    </source>
</evidence>